<organism>
    <name type="scientific">Histophilus somni (strain 129Pt)</name>
    <name type="common">Haemophilus somnus</name>
    <dbReference type="NCBI Taxonomy" id="205914"/>
    <lineage>
        <taxon>Bacteria</taxon>
        <taxon>Pseudomonadati</taxon>
        <taxon>Pseudomonadota</taxon>
        <taxon>Gammaproteobacteria</taxon>
        <taxon>Pasteurellales</taxon>
        <taxon>Pasteurellaceae</taxon>
        <taxon>Histophilus</taxon>
    </lineage>
</organism>
<feature type="chain" id="PRO_1000014922" description="Chaperone protein HtpG">
    <location>
        <begin position="1"/>
        <end position="626"/>
    </location>
</feature>
<feature type="region of interest" description="A; substrate-binding" evidence="1">
    <location>
        <begin position="1"/>
        <end position="339"/>
    </location>
</feature>
<feature type="region of interest" description="B" evidence="1">
    <location>
        <begin position="340"/>
        <end position="555"/>
    </location>
</feature>
<feature type="region of interest" description="C" evidence="1">
    <location>
        <begin position="556"/>
        <end position="626"/>
    </location>
</feature>
<sequence length="626" mass="71553">MSTNQETRGFQSEVKQLLQLMIHSLYSNKEIFLRELISNASDAADKLRFKALSAPELYEGDGDLKVRISFDAEKGTLTISDNGIGMTREQVIDHLGTIAKSGTKEFLAALGQEQAKDSQLIGQFGVGFYSAFIVADKVTVKTRAAGEPIDKAVLWESAGEGEYSVADIEKKERGTEITLHLREEEKEFANEWRVREIIGKYSDHIGLPVEILAKEYDEEGKETGIKWEKINKAQALWTRSKGEISDEEYKEFYKHLSHDFADPLLWTHNKVEGNQEYTSLLYVPSKAPWDLFNREHKHGLKLYVQRVFIMDDAEQFMPNYLRFMRGLIDSNDLPLNVSREILQDNKVTAALRKALTKRSLQMLEKLAKDDEEKYLQFWKEFGLVLKEGPSEDFANKENIAKLLRFASSKNDSSEQTVSLEDYVARMKEGQKAIYYITADSYIAAKNSPHLELFNKKDIEVLLLSDRIDEWMLSYLTEFDGKQLQPITKADLDLGDLADKEQEEQKEQDKTFSSFIERVKTLLGERVKDVRLTHRLTDTPAVVSTDNDQMTTQMAKLFAAAGQPVPEVKYTFELNPEHHLVKKVADLADEDEFANWIELLLEQAMLAERGSLENPTAFIKRVNSLLS</sequence>
<comment type="function">
    <text evidence="1">Molecular chaperone. Has ATPase activity.</text>
</comment>
<comment type="subunit">
    <text evidence="1">Homodimer.</text>
</comment>
<comment type="subcellular location">
    <subcellularLocation>
        <location evidence="1">Cytoplasm</location>
    </subcellularLocation>
</comment>
<comment type="similarity">
    <text evidence="1">Belongs to the heat shock protein 90 family.</text>
</comment>
<proteinExistence type="inferred from homology"/>
<reference key="1">
    <citation type="journal article" date="2007" name="J. Bacteriol.">
        <title>Complete genome sequence of Haemophilus somnus (Histophilus somni) strain 129Pt and comparison to Haemophilus ducreyi 35000HP and Haemophilus influenzae Rd.</title>
        <authorList>
            <person name="Challacombe J.F."/>
            <person name="Duncan A.J."/>
            <person name="Brettin T.S."/>
            <person name="Bruce D."/>
            <person name="Chertkov O."/>
            <person name="Detter J.C."/>
            <person name="Han C.S."/>
            <person name="Misra M."/>
            <person name="Richardson P."/>
            <person name="Tapia R."/>
            <person name="Thayer N."/>
            <person name="Xie G."/>
            <person name="Inzana T.J."/>
        </authorList>
    </citation>
    <scope>NUCLEOTIDE SEQUENCE [LARGE SCALE GENOMIC DNA]</scope>
    <source>
        <strain>129Pt</strain>
    </source>
</reference>
<name>HTPG_HISS1</name>
<dbReference type="EMBL" id="CP000436">
    <property type="protein sequence ID" value="ABI24727.1"/>
    <property type="molecule type" value="Genomic_DNA"/>
</dbReference>
<dbReference type="SMR" id="Q0I2A3"/>
<dbReference type="KEGG" id="hso:HS_0450"/>
<dbReference type="eggNOG" id="COG0326">
    <property type="taxonomic scope" value="Bacteria"/>
</dbReference>
<dbReference type="HOGENOM" id="CLU_006684_3_0_6"/>
<dbReference type="GO" id="GO:0005737">
    <property type="term" value="C:cytoplasm"/>
    <property type="evidence" value="ECO:0007669"/>
    <property type="project" value="UniProtKB-SubCell"/>
</dbReference>
<dbReference type="GO" id="GO:0005524">
    <property type="term" value="F:ATP binding"/>
    <property type="evidence" value="ECO:0007669"/>
    <property type="project" value="UniProtKB-UniRule"/>
</dbReference>
<dbReference type="GO" id="GO:0016887">
    <property type="term" value="F:ATP hydrolysis activity"/>
    <property type="evidence" value="ECO:0007669"/>
    <property type="project" value="InterPro"/>
</dbReference>
<dbReference type="GO" id="GO:0140662">
    <property type="term" value="F:ATP-dependent protein folding chaperone"/>
    <property type="evidence" value="ECO:0007669"/>
    <property type="project" value="InterPro"/>
</dbReference>
<dbReference type="GO" id="GO:0051082">
    <property type="term" value="F:unfolded protein binding"/>
    <property type="evidence" value="ECO:0007669"/>
    <property type="project" value="UniProtKB-UniRule"/>
</dbReference>
<dbReference type="CDD" id="cd16927">
    <property type="entry name" value="HATPase_Hsp90-like"/>
    <property type="match status" value="1"/>
</dbReference>
<dbReference type="FunFam" id="1.20.120.790:FF:000002">
    <property type="entry name" value="Molecular chaperone HtpG"/>
    <property type="match status" value="1"/>
</dbReference>
<dbReference type="FunFam" id="3.30.230.80:FF:000002">
    <property type="entry name" value="Molecular chaperone HtpG"/>
    <property type="match status" value="1"/>
</dbReference>
<dbReference type="FunFam" id="3.30.565.10:FF:000009">
    <property type="entry name" value="Molecular chaperone HtpG"/>
    <property type="match status" value="1"/>
</dbReference>
<dbReference type="FunFam" id="3.40.50.11260:FF:000002">
    <property type="entry name" value="Molecular chaperone HtpG"/>
    <property type="match status" value="1"/>
</dbReference>
<dbReference type="Gene3D" id="3.30.230.80">
    <property type="match status" value="1"/>
</dbReference>
<dbReference type="Gene3D" id="3.40.50.11260">
    <property type="match status" value="1"/>
</dbReference>
<dbReference type="Gene3D" id="1.20.120.790">
    <property type="entry name" value="Heat shock protein 90, C-terminal domain"/>
    <property type="match status" value="1"/>
</dbReference>
<dbReference type="Gene3D" id="3.30.565.10">
    <property type="entry name" value="Histidine kinase-like ATPase, C-terminal domain"/>
    <property type="match status" value="1"/>
</dbReference>
<dbReference type="HAMAP" id="MF_00505">
    <property type="entry name" value="HSP90"/>
    <property type="match status" value="1"/>
</dbReference>
<dbReference type="InterPro" id="IPR036890">
    <property type="entry name" value="HATPase_C_sf"/>
</dbReference>
<dbReference type="InterPro" id="IPR019805">
    <property type="entry name" value="Heat_shock_protein_90_CS"/>
</dbReference>
<dbReference type="InterPro" id="IPR037196">
    <property type="entry name" value="HSP90_C"/>
</dbReference>
<dbReference type="InterPro" id="IPR001404">
    <property type="entry name" value="Hsp90_fam"/>
</dbReference>
<dbReference type="InterPro" id="IPR020575">
    <property type="entry name" value="Hsp90_N"/>
</dbReference>
<dbReference type="InterPro" id="IPR020568">
    <property type="entry name" value="Ribosomal_Su5_D2-typ_SF"/>
</dbReference>
<dbReference type="NCBIfam" id="NF003555">
    <property type="entry name" value="PRK05218.1"/>
    <property type="match status" value="1"/>
</dbReference>
<dbReference type="PANTHER" id="PTHR11528">
    <property type="entry name" value="HEAT SHOCK PROTEIN 90 FAMILY MEMBER"/>
    <property type="match status" value="1"/>
</dbReference>
<dbReference type="Pfam" id="PF13589">
    <property type="entry name" value="HATPase_c_3"/>
    <property type="match status" value="1"/>
</dbReference>
<dbReference type="Pfam" id="PF00183">
    <property type="entry name" value="HSP90"/>
    <property type="match status" value="1"/>
</dbReference>
<dbReference type="PIRSF" id="PIRSF002583">
    <property type="entry name" value="Hsp90"/>
    <property type="match status" value="1"/>
</dbReference>
<dbReference type="PRINTS" id="PR00775">
    <property type="entry name" value="HEATSHOCK90"/>
</dbReference>
<dbReference type="SMART" id="SM00387">
    <property type="entry name" value="HATPase_c"/>
    <property type="match status" value="1"/>
</dbReference>
<dbReference type="SUPFAM" id="SSF55874">
    <property type="entry name" value="ATPase domain of HSP90 chaperone/DNA topoisomerase II/histidine kinase"/>
    <property type="match status" value="1"/>
</dbReference>
<dbReference type="SUPFAM" id="SSF110942">
    <property type="entry name" value="HSP90 C-terminal domain"/>
    <property type="match status" value="1"/>
</dbReference>
<dbReference type="SUPFAM" id="SSF54211">
    <property type="entry name" value="Ribosomal protein S5 domain 2-like"/>
    <property type="match status" value="1"/>
</dbReference>
<dbReference type="PROSITE" id="PS00298">
    <property type="entry name" value="HSP90"/>
    <property type="match status" value="1"/>
</dbReference>
<keyword id="KW-0067">ATP-binding</keyword>
<keyword id="KW-0143">Chaperone</keyword>
<keyword id="KW-0963">Cytoplasm</keyword>
<keyword id="KW-0547">Nucleotide-binding</keyword>
<keyword id="KW-0346">Stress response</keyword>
<protein>
    <recommendedName>
        <fullName evidence="1">Chaperone protein HtpG</fullName>
    </recommendedName>
    <alternativeName>
        <fullName evidence="1">Heat shock protein HtpG</fullName>
    </alternativeName>
    <alternativeName>
        <fullName evidence="1">High temperature protein G</fullName>
    </alternativeName>
</protein>
<accession>Q0I2A3</accession>
<gene>
    <name evidence="1" type="primary">htpG</name>
    <name type="ordered locus">HS_0450</name>
</gene>
<evidence type="ECO:0000255" key="1">
    <source>
        <dbReference type="HAMAP-Rule" id="MF_00505"/>
    </source>
</evidence>